<keyword id="KW-0963">Cytoplasm</keyword>
<keyword id="KW-0312">Gluconeogenesis</keyword>
<keyword id="KW-0324">Glycolysis</keyword>
<keyword id="KW-0413">Isomerase</keyword>
<reference key="1">
    <citation type="journal article" date="2006" name="Proc. Natl. Acad. Sci. U.S.A.">
        <title>Comparative genomics of the lactic acid bacteria.</title>
        <authorList>
            <person name="Makarova K.S."/>
            <person name="Slesarev A."/>
            <person name="Wolf Y.I."/>
            <person name="Sorokin A."/>
            <person name="Mirkin B."/>
            <person name="Koonin E.V."/>
            <person name="Pavlov A."/>
            <person name="Pavlova N."/>
            <person name="Karamychev V."/>
            <person name="Polouchine N."/>
            <person name="Shakhova V."/>
            <person name="Grigoriev I."/>
            <person name="Lou Y."/>
            <person name="Rohksar D."/>
            <person name="Lucas S."/>
            <person name="Huang K."/>
            <person name="Goodstein D.M."/>
            <person name="Hawkins T."/>
            <person name="Plengvidhya V."/>
            <person name="Welker D."/>
            <person name="Hughes J."/>
            <person name="Goh Y."/>
            <person name="Benson A."/>
            <person name="Baldwin K."/>
            <person name="Lee J.-H."/>
            <person name="Diaz-Muniz I."/>
            <person name="Dosti B."/>
            <person name="Smeianov V."/>
            <person name="Wechter W."/>
            <person name="Barabote R."/>
            <person name="Lorca G."/>
            <person name="Altermann E."/>
            <person name="Barrangou R."/>
            <person name="Ganesan B."/>
            <person name="Xie Y."/>
            <person name="Rawsthorne H."/>
            <person name="Tamir D."/>
            <person name="Parker C."/>
            <person name="Breidt F."/>
            <person name="Broadbent J.R."/>
            <person name="Hutkins R."/>
            <person name="O'Sullivan D."/>
            <person name="Steele J."/>
            <person name="Unlu G."/>
            <person name="Saier M.H. Jr."/>
            <person name="Klaenhammer T."/>
            <person name="Richardson P."/>
            <person name="Kozyavkin S."/>
            <person name="Weimer B.C."/>
            <person name="Mills D.A."/>
        </authorList>
    </citation>
    <scope>NUCLEOTIDE SEQUENCE [LARGE SCALE GENOMIC DNA]</scope>
    <source>
        <strain>ATCC 33323 / DSM 20243 / BCRC 14619 / CIP 102991 / JCM 1131 / KCTC 3163 / NCIMB 11718 / NCTC 13722 / AM63</strain>
    </source>
</reference>
<evidence type="ECO:0000255" key="1">
    <source>
        <dbReference type="HAMAP-Rule" id="MF_00147"/>
    </source>
</evidence>
<sequence>MRTPIIAGNWKLHMNPEQTVEFVNAVKGKLPDPSKVESVIAAPAVDLYVLKKAAEGSDLHTGAENAYFEVEGAFTGETSPKVLNEMGIDYCIIGHSERRGYFHETDEDINKKAKALFANGVTPIICCGESLETREANKQEDWVVAQIKAALDGLTAEQVSKLVIAYEPIWAIGTGKTASADQAEEMCKTIRETVKDLYNEETAENVRIQYGGSVKPANVKELMSKPDIDGGLVGGASLDPESFLALVNYQD</sequence>
<dbReference type="EC" id="5.3.1.1" evidence="1"/>
<dbReference type="EMBL" id="CP000413">
    <property type="protein sequence ID" value="ABJ60669.1"/>
    <property type="molecule type" value="Genomic_DNA"/>
</dbReference>
<dbReference type="RefSeq" id="WP_003647014.1">
    <property type="nucleotide sequence ID" value="NZ_WBMG01000002.1"/>
</dbReference>
<dbReference type="SMR" id="Q042F3"/>
<dbReference type="GeneID" id="29638940"/>
<dbReference type="KEGG" id="lga:LGAS_1306"/>
<dbReference type="HOGENOM" id="CLU_024251_2_3_9"/>
<dbReference type="BioCyc" id="LGAS324831:G1G6Y-1301-MONOMER"/>
<dbReference type="UniPathway" id="UPA00109">
    <property type="reaction ID" value="UER00189"/>
</dbReference>
<dbReference type="UniPathway" id="UPA00138"/>
<dbReference type="Proteomes" id="UP000000664">
    <property type="component" value="Chromosome"/>
</dbReference>
<dbReference type="GO" id="GO:0005829">
    <property type="term" value="C:cytosol"/>
    <property type="evidence" value="ECO:0007669"/>
    <property type="project" value="TreeGrafter"/>
</dbReference>
<dbReference type="GO" id="GO:0004807">
    <property type="term" value="F:triose-phosphate isomerase activity"/>
    <property type="evidence" value="ECO:0007669"/>
    <property type="project" value="UniProtKB-UniRule"/>
</dbReference>
<dbReference type="GO" id="GO:0006094">
    <property type="term" value="P:gluconeogenesis"/>
    <property type="evidence" value="ECO:0007669"/>
    <property type="project" value="UniProtKB-UniRule"/>
</dbReference>
<dbReference type="GO" id="GO:0046166">
    <property type="term" value="P:glyceraldehyde-3-phosphate biosynthetic process"/>
    <property type="evidence" value="ECO:0007669"/>
    <property type="project" value="TreeGrafter"/>
</dbReference>
<dbReference type="GO" id="GO:0019563">
    <property type="term" value="P:glycerol catabolic process"/>
    <property type="evidence" value="ECO:0007669"/>
    <property type="project" value="TreeGrafter"/>
</dbReference>
<dbReference type="GO" id="GO:0006096">
    <property type="term" value="P:glycolytic process"/>
    <property type="evidence" value="ECO:0007669"/>
    <property type="project" value="UniProtKB-UniRule"/>
</dbReference>
<dbReference type="CDD" id="cd00311">
    <property type="entry name" value="TIM"/>
    <property type="match status" value="1"/>
</dbReference>
<dbReference type="FunFam" id="3.20.20.70:FF:000016">
    <property type="entry name" value="Triosephosphate isomerase"/>
    <property type="match status" value="1"/>
</dbReference>
<dbReference type="Gene3D" id="3.20.20.70">
    <property type="entry name" value="Aldolase class I"/>
    <property type="match status" value="1"/>
</dbReference>
<dbReference type="HAMAP" id="MF_00147_B">
    <property type="entry name" value="TIM_B"/>
    <property type="match status" value="1"/>
</dbReference>
<dbReference type="InterPro" id="IPR013785">
    <property type="entry name" value="Aldolase_TIM"/>
</dbReference>
<dbReference type="InterPro" id="IPR035990">
    <property type="entry name" value="TIM_sf"/>
</dbReference>
<dbReference type="InterPro" id="IPR022896">
    <property type="entry name" value="TrioseP_Isoase_bac/euk"/>
</dbReference>
<dbReference type="InterPro" id="IPR000652">
    <property type="entry name" value="Triosephosphate_isomerase"/>
</dbReference>
<dbReference type="InterPro" id="IPR020861">
    <property type="entry name" value="Triosephosphate_isomerase_AS"/>
</dbReference>
<dbReference type="NCBIfam" id="TIGR00419">
    <property type="entry name" value="tim"/>
    <property type="match status" value="1"/>
</dbReference>
<dbReference type="PANTHER" id="PTHR21139">
    <property type="entry name" value="TRIOSEPHOSPHATE ISOMERASE"/>
    <property type="match status" value="1"/>
</dbReference>
<dbReference type="PANTHER" id="PTHR21139:SF42">
    <property type="entry name" value="TRIOSEPHOSPHATE ISOMERASE"/>
    <property type="match status" value="1"/>
</dbReference>
<dbReference type="Pfam" id="PF00121">
    <property type="entry name" value="TIM"/>
    <property type="match status" value="1"/>
</dbReference>
<dbReference type="SUPFAM" id="SSF51351">
    <property type="entry name" value="Triosephosphate isomerase (TIM)"/>
    <property type="match status" value="1"/>
</dbReference>
<dbReference type="PROSITE" id="PS00171">
    <property type="entry name" value="TIM_1"/>
    <property type="match status" value="1"/>
</dbReference>
<dbReference type="PROSITE" id="PS51440">
    <property type="entry name" value="TIM_2"/>
    <property type="match status" value="1"/>
</dbReference>
<organism>
    <name type="scientific">Lactobacillus gasseri (strain ATCC 33323 / DSM 20243 / BCRC 14619 / CIP 102991 / JCM 1131 / KCTC 3163 / NCIMB 11718 / NCTC 13722 / AM63)</name>
    <dbReference type="NCBI Taxonomy" id="324831"/>
    <lineage>
        <taxon>Bacteria</taxon>
        <taxon>Bacillati</taxon>
        <taxon>Bacillota</taxon>
        <taxon>Bacilli</taxon>
        <taxon>Lactobacillales</taxon>
        <taxon>Lactobacillaceae</taxon>
        <taxon>Lactobacillus</taxon>
    </lineage>
</organism>
<name>TPIS_LACGA</name>
<proteinExistence type="inferred from homology"/>
<accession>Q042F3</accession>
<comment type="function">
    <text evidence="1">Involved in the gluconeogenesis. Catalyzes stereospecifically the conversion of dihydroxyacetone phosphate (DHAP) to D-glyceraldehyde-3-phosphate (G3P).</text>
</comment>
<comment type="catalytic activity">
    <reaction evidence="1">
        <text>D-glyceraldehyde 3-phosphate = dihydroxyacetone phosphate</text>
        <dbReference type="Rhea" id="RHEA:18585"/>
        <dbReference type="ChEBI" id="CHEBI:57642"/>
        <dbReference type="ChEBI" id="CHEBI:59776"/>
        <dbReference type="EC" id="5.3.1.1"/>
    </reaction>
</comment>
<comment type="pathway">
    <text evidence="1">Carbohydrate biosynthesis; gluconeogenesis.</text>
</comment>
<comment type="pathway">
    <text evidence="1">Carbohydrate degradation; glycolysis; D-glyceraldehyde 3-phosphate from glycerone phosphate: step 1/1.</text>
</comment>
<comment type="subunit">
    <text evidence="1">Homodimer.</text>
</comment>
<comment type="subcellular location">
    <subcellularLocation>
        <location evidence="1">Cytoplasm</location>
    </subcellularLocation>
</comment>
<comment type="similarity">
    <text evidence="1">Belongs to the triosephosphate isomerase family.</text>
</comment>
<gene>
    <name evidence="1" type="primary">tpiA</name>
    <name type="ordered locus">LGAS_1306</name>
</gene>
<feature type="chain" id="PRO_1000009846" description="Triosephosphate isomerase">
    <location>
        <begin position="1"/>
        <end position="251"/>
    </location>
</feature>
<feature type="active site" description="Electrophile" evidence="1">
    <location>
        <position position="95"/>
    </location>
</feature>
<feature type="active site" description="Proton acceptor" evidence="1">
    <location>
        <position position="167"/>
    </location>
</feature>
<feature type="binding site" evidence="1">
    <location>
        <begin position="9"/>
        <end position="11"/>
    </location>
    <ligand>
        <name>substrate</name>
    </ligand>
</feature>
<feature type="binding site" evidence="1">
    <location>
        <position position="173"/>
    </location>
    <ligand>
        <name>substrate</name>
    </ligand>
</feature>
<feature type="binding site" evidence="1">
    <location>
        <position position="213"/>
    </location>
    <ligand>
        <name>substrate</name>
    </ligand>
</feature>
<feature type="binding site" evidence="1">
    <location>
        <begin position="234"/>
        <end position="235"/>
    </location>
    <ligand>
        <name>substrate</name>
    </ligand>
</feature>
<protein>
    <recommendedName>
        <fullName evidence="1">Triosephosphate isomerase</fullName>
        <shortName evidence="1">TIM</shortName>
        <shortName evidence="1">TPI</shortName>
        <ecNumber evidence="1">5.3.1.1</ecNumber>
    </recommendedName>
    <alternativeName>
        <fullName evidence="1">Triose-phosphate isomerase</fullName>
    </alternativeName>
</protein>